<reference key="1">
    <citation type="journal article" date="2005" name="Nature">
        <title>The map-based sequence of the rice genome.</title>
        <authorList>
            <consortium name="International rice genome sequencing project (IRGSP)"/>
        </authorList>
    </citation>
    <scope>NUCLEOTIDE SEQUENCE [LARGE SCALE GENOMIC DNA]</scope>
    <source>
        <strain>cv. Nipponbare</strain>
    </source>
</reference>
<reference key="2">
    <citation type="journal article" date="2008" name="Nucleic Acids Res.">
        <title>The rice annotation project database (RAP-DB): 2008 update.</title>
        <authorList>
            <consortium name="The rice annotation project (RAP)"/>
        </authorList>
    </citation>
    <scope>GENOME REANNOTATION</scope>
    <source>
        <strain>cv. Nipponbare</strain>
    </source>
</reference>
<reference key="3">
    <citation type="journal article" date="2013" name="Rice">
        <title>Improvement of the Oryza sativa Nipponbare reference genome using next generation sequence and optical map data.</title>
        <authorList>
            <person name="Kawahara Y."/>
            <person name="de la Bastide M."/>
            <person name="Hamilton J.P."/>
            <person name="Kanamori H."/>
            <person name="McCombie W.R."/>
            <person name="Ouyang S."/>
            <person name="Schwartz D.C."/>
            <person name="Tanaka T."/>
            <person name="Wu J."/>
            <person name="Zhou S."/>
            <person name="Childs K.L."/>
            <person name="Davidson R.M."/>
            <person name="Lin H."/>
            <person name="Quesada-Ocampo L."/>
            <person name="Vaillancourt B."/>
            <person name="Sakai H."/>
            <person name="Lee S.S."/>
            <person name="Kim J."/>
            <person name="Numa H."/>
            <person name="Itoh T."/>
            <person name="Buell C.R."/>
            <person name="Matsumoto T."/>
        </authorList>
    </citation>
    <scope>GENOME REANNOTATION</scope>
    <source>
        <strain>cv. Nipponbare</strain>
    </source>
</reference>
<reference key="4">
    <citation type="journal article" date="2005" name="PLoS Biol.">
        <title>The genomes of Oryza sativa: a history of duplications.</title>
        <authorList>
            <person name="Yu J."/>
            <person name="Wang J."/>
            <person name="Lin W."/>
            <person name="Li S."/>
            <person name="Li H."/>
            <person name="Zhou J."/>
            <person name="Ni P."/>
            <person name="Dong W."/>
            <person name="Hu S."/>
            <person name="Zeng C."/>
            <person name="Zhang J."/>
            <person name="Zhang Y."/>
            <person name="Li R."/>
            <person name="Xu Z."/>
            <person name="Li S."/>
            <person name="Li X."/>
            <person name="Zheng H."/>
            <person name="Cong L."/>
            <person name="Lin L."/>
            <person name="Yin J."/>
            <person name="Geng J."/>
            <person name="Li G."/>
            <person name="Shi J."/>
            <person name="Liu J."/>
            <person name="Lv H."/>
            <person name="Li J."/>
            <person name="Wang J."/>
            <person name="Deng Y."/>
            <person name="Ran L."/>
            <person name="Shi X."/>
            <person name="Wang X."/>
            <person name="Wu Q."/>
            <person name="Li C."/>
            <person name="Ren X."/>
            <person name="Wang J."/>
            <person name="Wang X."/>
            <person name="Li D."/>
            <person name="Liu D."/>
            <person name="Zhang X."/>
            <person name="Ji Z."/>
            <person name="Zhao W."/>
            <person name="Sun Y."/>
            <person name="Zhang Z."/>
            <person name="Bao J."/>
            <person name="Han Y."/>
            <person name="Dong L."/>
            <person name="Ji J."/>
            <person name="Chen P."/>
            <person name="Wu S."/>
            <person name="Liu J."/>
            <person name="Xiao Y."/>
            <person name="Bu D."/>
            <person name="Tan J."/>
            <person name="Yang L."/>
            <person name="Ye C."/>
            <person name="Zhang J."/>
            <person name="Xu J."/>
            <person name="Zhou Y."/>
            <person name="Yu Y."/>
            <person name="Zhang B."/>
            <person name="Zhuang S."/>
            <person name="Wei H."/>
            <person name="Liu B."/>
            <person name="Lei M."/>
            <person name="Yu H."/>
            <person name="Li Y."/>
            <person name="Xu H."/>
            <person name="Wei S."/>
            <person name="He X."/>
            <person name="Fang L."/>
            <person name="Zhang Z."/>
            <person name="Zhang Y."/>
            <person name="Huang X."/>
            <person name="Su Z."/>
            <person name="Tong W."/>
            <person name="Li J."/>
            <person name="Tong Z."/>
            <person name="Li S."/>
            <person name="Ye J."/>
            <person name="Wang L."/>
            <person name="Fang L."/>
            <person name="Lei T."/>
            <person name="Chen C.-S."/>
            <person name="Chen H.-C."/>
            <person name="Xu Z."/>
            <person name="Li H."/>
            <person name="Huang H."/>
            <person name="Zhang F."/>
            <person name="Xu H."/>
            <person name="Li N."/>
            <person name="Zhao C."/>
            <person name="Li S."/>
            <person name="Dong L."/>
            <person name="Huang Y."/>
            <person name="Li L."/>
            <person name="Xi Y."/>
            <person name="Qi Q."/>
            <person name="Li W."/>
            <person name="Zhang B."/>
            <person name="Hu W."/>
            <person name="Zhang Y."/>
            <person name="Tian X."/>
            <person name="Jiao Y."/>
            <person name="Liang X."/>
            <person name="Jin J."/>
            <person name="Gao L."/>
            <person name="Zheng W."/>
            <person name="Hao B."/>
            <person name="Liu S.-M."/>
            <person name="Wang W."/>
            <person name="Yuan L."/>
            <person name="Cao M."/>
            <person name="McDermott J."/>
            <person name="Samudrala R."/>
            <person name="Wang J."/>
            <person name="Wong G.K.-S."/>
            <person name="Yang H."/>
        </authorList>
    </citation>
    <scope>NUCLEOTIDE SEQUENCE [LARGE SCALE GENOMIC DNA]</scope>
    <source>
        <strain>cv. Nipponbare</strain>
    </source>
</reference>
<reference key="5">
    <citation type="journal article" date="2003" name="Science">
        <title>Collection, mapping, and annotation of over 28,000 cDNA clones from japonica rice.</title>
        <authorList>
            <consortium name="The rice full-length cDNA consortium"/>
        </authorList>
    </citation>
    <scope>NUCLEOTIDE SEQUENCE [LARGE SCALE MRNA]</scope>
    <source>
        <strain>cv. Nipponbare</strain>
    </source>
</reference>
<keyword id="KW-0021">Allosteric enzyme</keyword>
<keyword id="KW-0149">Chlorophyll biosynthesis</keyword>
<keyword id="KW-0150">Chloroplast</keyword>
<keyword id="KW-0350">Heme biosynthesis</keyword>
<keyword id="KW-0456">Lyase</keyword>
<keyword id="KW-0460">Magnesium</keyword>
<keyword id="KW-0479">Metal-binding</keyword>
<keyword id="KW-0934">Plastid</keyword>
<keyword id="KW-0627">Porphyrin biosynthesis</keyword>
<keyword id="KW-1185">Reference proteome</keyword>
<keyword id="KW-0809">Transit peptide</keyword>
<proteinExistence type="evidence at transcript level"/>
<name>HEM2_ORYSJ</name>
<protein>
    <recommendedName>
        <fullName>Delta-aminolevulinic acid dehydratase, chloroplastic</fullName>
        <shortName>ALADH</shortName>
        <ecNumber>4.2.1.24</ecNumber>
    </recommendedName>
    <alternativeName>
        <fullName>Porphobilinogen synthase</fullName>
    </alternativeName>
</protein>
<organism>
    <name type="scientific">Oryza sativa subsp. japonica</name>
    <name type="common">Rice</name>
    <dbReference type="NCBI Taxonomy" id="39947"/>
    <lineage>
        <taxon>Eukaryota</taxon>
        <taxon>Viridiplantae</taxon>
        <taxon>Streptophyta</taxon>
        <taxon>Embryophyta</taxon>
        <taxon>Tracheophyta</taxon>
        <taxon>Spermatophyta</taxon>
        <taxon>Magnoliopsida</taxon>
        <taxon>Liliopsida</taxon>
        <taxon>Poales</taxon>
        <taxon>Poaceae</taxon>
        <taxon>BOP clade</taxon>
        <taxon>Oryzoideae</taxon>
        <taxon>Oryzeae</taxon>
        <taxon>Oryzinae</taxon>
        <taxon>Oryza</taxon>
        <taxon>Oryza sativa</taxon>
    </lineage>
</organism>
<sequence length="426" mass="46286">MASTVSFSPANVQMLQGRSCHGHAAFGGCSAVPRTGPRMRSVAVRVSSEQEAAPAVRAPSGRTIEECEADAVAGRFPAPPPLVRPKAPEGTPQIRPLDLTKRPRRNRRSPALRAAFQETTISPANLVLPLFIHEGEDDAPIGAMPGCYRLGWRHGLLDEVYKSRDVGVNSFVLFPKVPDALKSQSGDEAYNDNGLVPRTIRLLKDKFPDIVVYTDVALDPYSSDGHDGIVREDGVIMNDETVYQLCKQAVSQARAGADVVSPSDMMDGRVGAIRAALDAEGFHDVSIMSYTAKYASSFYGPFREALDSNPRFGDKKTYQMNPANYREALLETAADEAEGADILLVKPGLPYLDVIRLLRDNSALPIAAYQVSGEYSMIKAGGALNMIDEEKVMMESLMCLRRAGADIILTYFARQAANVLCGMRSN</sequence>
<gene>
    <name type="primary">HEMB</name>
    <name type="ordered locus">Os06g0704600</name>
    <name type="ordered locus">LOC_Os06g49110</name>
    <name type="ORF">OsJ_22561</name>
    <name type="ORF">P0018H04.2</name>
</gene>
<feature type="transit peptide" description="Chloroplast" evidence="2">
    <location>
        <begin position="1"/>
        <end position="45"/>
    </location>
</feature>
<feature type="chain" id="PRO_0000376065" description="Delta-aminolevulinic acid dehydratase, chloroplastic">
    <location>
        <begin position="46"/>
        <end position="426"/>
    </location>
</feature>
<feature type="region of interest" description="Disordered" evidence="3">
    <location>
        <begin position="74"/>
        <end position="107"/>
    </location>
</feature>
<feature type="active site" description="Schiff-base intermediate with substrate" evidence="1">
    <location>
        <position position="293"/>
    </location>
</feature>
<feature type="active site" description="Schiff-base intermediate with substrate" evidence="1">
    <location>
        <position position="346"/>
    </location>
</feature>
<feature type="binding site" evidence="1">
    <location>
        <position position="303"/>
    </location>
    <ligand>
        <name>5-aminolevulinate</name>
        <dbReference type="ChEBI" id="CHEBI:356416"/>
        <label>1</label>
    </ligand>
</feature>
<feature type="binding site" evidence="1">
    <location>
        <position position="315"/>
    </location>
    <ligand>
        <name>5-aminolevulinate</name>
        <dbReference type="ChEBI" id="CHEBI:356416"/>
        <label>1</label>
    </ligand>
</feature>
<feature type="binding site" evidence="1">
    <location>
        <position position="331"/>
    </location>
    <ligand>
        <name>Mg(2+)</name>
        <dbReference type="ChEBI" id="CHEBI:18420"/>
    </ligand>
</feature>
<feature type="binding site" evidence="1">
    <location>
        <position position="372"/>
    </location>
    <ligand>
        <name>5-aminolevulinate</name>
        <dbReference type="ChEBI" id="CHEBI:356416"/>
        <label>2</label>
    </ligand>
</feature>
<feature type="binding site" evidence="1">
    <location>
        <position position="411"/>
    </location>
    <ligand>
        <name>5-aminolevulinate</name>
        <dbReference type="ChEBI" id="CHEBI:356416"/>
        <label>2</label>
    </ligand>
</feature>
<comment type="function">
    <text evidence="1">Catalyzes an early step in the biosynthesis of tetrapyrroles. Binds two molecules of 5-aminolevulinate per subunit, each at a distinct site, and catalyzes their condensation to form porphobilinogen (By similarity).</text>
</comment>
<comment type="catalytic activity">
    <reaction>
        <text>2 5-aminolevulinate = porphobilinogen + 2 H2O + H(+)</text>
        <dbReference type="Rhea" id="RHEA:24064"/>
        <dbReference type="ChEBI" id="CHEBI:15377"/>
        <dbReference type="ChEBI" id="CHEBI:15378"/>
        <dbReference type="ChEBI" id="CHEBI:58126"/>
        <dbReference type="ChEBI" id="CHEBI:356416"/>
        <dbReference type="EC" id="4.2.1.24"/>
    </reaction>
</comment>
<comment type="cofactor">
    <cofactor evidence="1">
        <name>Mg(2+)</name>
        <dbReference type="ChEBI" id="CHEBI:18420"/>
    </cofactor>
    <text evidence="1">Binds 2 magnesium ions per monomer. The first magnesium ion is required for catalysis. The second functions as allosteric activator.</text>
</comment>
<comment type="pathway">
    <text>Porphyrin-containing compound metabolism; protoporphyrin-IX biosynthesis; coproporphyrinogen-III from 5-aminolevulinate: step 1/4.</text>
</comment>
<comment type="subunit">
    <text evidence="1">Homooctamer.</text>
</comment>
<comment type="subcellular location">
    <subcellularLocation>
        <location evidence="4">Plastid</location>
        <location evidence="4">Chloroplast</location>
    </subcellularLocation>
</comment>
<comment type="similarity">
    <text evidence="4">Belongs to the ALAD family.</text>
</comment>
<dbReference type="EC" id="4.2.1.24"/>
<dbReference type="EMBL" id="AP003761">
    <property type="protein sequence ID" value="BAD53795.1"/>
    <property type="molecule type" value="Genomic_DNA"/>
</dbReference>
<dbReference type="EMBL" id="AP008212">
    <property type="protein sequence ID" value="BAF20424.1"/>
    <property type="molecule type" value="Genomic_DNA"/>
</dbReference>
<dbReference type="EMBL" id="AP014962">
    <property type="protein sequence ID" value="BAS99386.1"/>
    <property type="molecule type" value="Genomic_DNA"/>
</dbReference>
<dbReference type="EMBL" id="CM000143">
    <property type="protein sequence ID" value="EAZ38208.1"/>
    <property type="molecule type" value="Genomic_DNA"/>
</dbReference>
<dbReference type="EMBL" id="AK065784">
    <property type="protein sequence ID" value="BAG89678.1"/>
    <property type="molecule type" value="mRNA"/>
</dbReference>
<dbReference type="EMBL" id="AK119551">
    <property type="protein sequence ID" value="BAG99687.1"/>
    <property type="molecule type" value="mRNA"/>
</dbReference>
<dbReference type="RefSeq" id="XP_015643005.1">
    <property type="nucleotide sequence ID" value="XM_015787519.1"/>
</dbReference>
<dbReference type="RefSeq" id="XP_015643007.1">
    <property type="nucleotide sequence ID" value="XM_015787521.1"/>
</dbReference>
<dbReference type="RefSeq" id="XP_015643008.1">
    <property type="nucleotide sequence ID" value="XM_015787522.1"/>
</dbReference>
<dbReference type="RefSeq" id="XP_015643009.1">
    <property type="nucleotide sequence ID" value="XM_015787523.1"/>
</dbReference>
<dbReference type="SMR" id="Q5Z8V9"/>
<dbReference type="FunCoup" id="Q5Z8V9">
    <property type="interactions" value="2576"/>
</dbReference>
<dbReference type="STRING" id="39947.Q5Z8V9"/>
<dbReference type="PaxDb" id="39947-Q5Z8V9"/>
<dbReference type="EnsemblPlants" id="Os06t0704600-01">
    <property type="protein sequence ID" value="Os06t0704600-01"/>
    <property type="gene ID" value="Os06g0704600"/>
</dbReference>
<dbReference type="EnsemblPlants" id="Os06t0704600-02">
    <property type="protein sequence ID" value="Os06t0704600-02"/>
    <property type="gene ID" value="Os06g0704600"/>
</dbReference>
<dbReference type="Gramene" id="Os06t0704600-01">
    <property type="protein sequence ID" value="Os06t0704600-01"/>
    <property type="gene ID" value="Os06g0704600"/>
</dbReference>
<dbReference type="Gramene" id="Os06t0704600-02">
    <property type="protein sequence ID" value="Os06t0704600-02"/>
    <property type="gene ID" value="Os06g0704600"/>
</dbReference>
<dbReference type="KEGG" id="dosa:Os06g0704600"/>
<dbReference type="eggNOG" id="KOG2794">
    <property type="taxonomic scope" value="Eukaryota"/>
</dbReference>
<dbReference type="HOGENOM" id="CLU_035731_1_1_1"/>
<dbReference type="InParanoid" id="Q5Z8V9"/>
<dbReference type="OMA" id="YQMDYAN"/>
<dbReference type="OrthoDB" id="1530at2759"/>
<dbReference type="PlantReactome" id="R-OSA-4827054">
    <property type="pathway name" value="Tetrapyrrole biosynthesis I"/>
</dbReference>
<dbReference type="UniPathway" id="UPA00251">
    <property type="reaction ID" value="UER00318"/>
</dbReference>
<dbReference type="Proteomes" id="UP000000763">
    <property type="component" value="Chromosome 6"/>
</dbReference>
<dbReference type="Proteomes" id="UP000007752">
    <property type="component" value="Chromosome 6"/>
</dbReference>
<dbReference type="Proteomes" id="UP000059680">
    <property type="component" value="Chromosome 6"/>
</dbReference>
<dbReference type="GO" id="GO:0009507">
    <property type="term" value="C:chloroplast"/>
    <property type="evidence" value="ECO:0007669"/>
    <property type="project" value="UniProtKB-SubCell"/>
</dbReference>
<dbReference type="GO" id="GO:0005829">
    <property type="term" value="C:cytosol"/>
    <property type="evidence" value="ECO:0000318"/>
    <property type="project" value="GO_Central"/>
</dbReference>
<dbReference type="GO" id="GO:0004655">
    <property type="term" value="F:porphobilinogen synthase activity"/>
    <property type="evidence" value="ECO:0000318"/>
    <property type="project" value="GO_Central"/>
</dbReference>
<dbReference type="GO" id="GO:0008270">
    <property type="term" value="F:zinc ion binding"/>
    <property type="evidence" value="ECO:0000318"/>
    <property type="project" value="GO_Central"/>
</dbReference>
<dbReference type="GO" id="GO:0015995">
    <property type="term" value="P:chlorophyll biosynthetic process"/>
    <property type="evidence" value="ECO:0007669"/>
    <property type="project" value="UniProtKB-KW"/>
</dbReference>
<dbReference type="GO" id="GO:0006783">
    <property type="term" value="P:heme biosynthetic process"/>
    <property type="evidence" value="ECO:0000318"/>
    <property type="project" value="GO_Central"/>
</dbReference>
<dbReference type="GO" id="GO:0006782">
    <property type="term" value="P:protoporphyrinogen IX biosynthetic process"/>
    <property type="evidence" value="ECO:0007669"/>
    <property type="project" value="UniProtKB-UniPathway"/>
</dbReference>
<dbReference type="CDD" id="cd04823">
    <property type="entry name" value="ALAD_PBGS_aspartate_rich"/>
    <property type="match status" value="1"/>
</dbReference>
<dbReference type="FunFam" id="3.20.20.70:FF:000101">
    <property type="entry name" value="Delta-aminolevulinic acid dehydratase"/>
    <property type="match status" value="1"/>
</dbReference>
<dbReference type="Gene3D" id="3.20.20.70">
    <property type="entry name" value="Aldolase class I"/>
    <property type="match status" value="1"/>
</dbReference>
<dbReference type="InterPro" id="IPR001731">
    <property type="entry name" value="ALAD"/>
</dbReference>
<dbReference type="InterPro" id="IPR030656">
    <property type="entry name" value="ALAD_AS"/>
</dbReference>
<dbReference type="InterPro" id="IPR013785">
    <property type="entry name" value="Aldolase_TIM"/>
</dbReference>
<dbReference type="NCBIfam" id="NF006762">
    <property type="entry name" value="PRK09283.1"/>
    <property type="match status" value="1"/>
</dbReference>
<dbReference type="PANTHER" id="PTHR11458">
    <property type="entry name" value="DELTA-AMINOLEVULINIC ACID DEHYDRATASE"/>
    <property type="match status" value="1"/>
</dbReference>
<dbReference type="PANTHER" id="PTHR11458:SF0">
    <property type="entry name" value="DELTA-AMINOLEVULINIC ACID DEHYDRATASE"/>
    <property type="match status" value="1"/>
</dbReference>
<dbReference type="Pfam" id="PF00490">
    <property type="entry name" value="ALAD"/>
    <property type="match status" value="1"/>
</dbReference>
<dbReference type="PRINTS" id="PR00144">
    <property type="entry name" value="DALDHYDRTASE"/>
</dbReference>
<dbReference type="SMART" id="SM01004">
    <property type="entry name" value="ALAD"/>
    <property type="match status" value="1"/>
</dbReference>
<dbReference type="SUPFAM" id="SSF51569">
    <property type="entry name" value="Aldolase"/>
    <property type="match status" value="1"/>
</dbReference>
<dbReference type="PROSITE" id="PS00169">
    <property type="entry name" value="D_ALA_DEHYDRATASE"/>
    <property type="match status" value="1"/>
</dbReference>
<accession>Q5Z8V9</accession>
<accession>A0A0P0X108</accession>
<evidence type="ECO:0000250" key="1"/>
<evidence type="ECO:0000255" key="2"/>
<evidence type="ECO:0000256" key="3">
    <source>
        <dbReference type="SAM" id="MobiDB-lite"/>
    </source>
</evidence>
<evidence type="ECO:0000305" key="4"/>